<proteinExistence type="inferred from homology"/>
<protein>
    <recommendedName>
        <fullName evidence="1">Peptidyl-tRNA hydrolase</fullName>
        <shortName evidence="1">Pth</shortName>
        <ecNumber evidence="1">3.1.1.29</ecNumber>
    </recommendedName>
</protein>
<accession>B4RT72</accession>
<accession>F2G7K2</accession>
<name>PTH_ALTMD</name>
<organism>
    <name type="scientific">Alteromonas mediterranea (strain DSM 17117 / CIP 110805 / LMG 28347 / Deep ecotype)</name>
    <dbReference type="NCBI Taxonomy" id="1774373"/>
    <lineage>
        <taxon>Bacteria</taxon>
        <taxon>Pseudomonadati</taxon>
        <taxon>Pseudomonadota</taxon>
        <taxon>Gammaproteobacteria</taxon>
        <taxon>Alteromonadales</taxon>
        <taxon>Alteromonadaceae</taxon>
        <taxon>Alteromonas/Salinimonas group</taxon>
        <taxon>Alteromonas</taxon>
    </lineage>
</organism>
<comment type="function">
    <text evidence="1">Hydrolyzes ribosome-free peptidyl-tRNAs (with 1 or more amino acids incorporated), which drop off the ribosome during protein synthesis, or as a result of ribosome stalling.</text>
</comment>
<comment type="function">
    <text evidence="1">Catalyzes the release of premature peptidyl moieties from peptidyl-tRNA molecules trapped in stalled 50S ribosomal subunits, and thus maintains levels of free tRNAs and 50S ribosomes.</text>
</comment>
<comment type="catalytic activity">
    <reaction evidence="1">
        <text>an N-acyl-L-alpha-aminoacyl-tRNA + H2O = an N-acyl-L-amino acid + a tRNA + H(+)</text>
        <dbReference type="Rhea" id="RHEA:54448"/>
        <dbReference type="Rhea" id="RHEA-COMP:10123"/>
        <dbReference type="Rhea" id="RHEA-COMP:13883"/>
        <dbReference type="ChEBI" id="CHEBI:15377"/>
        <dbReference type="ChEBI" id="CHEBI:15378"/>
        <dbReference type="ChEBI" id="CHEBI:59874"/>
        <dbReference type="ChEBI" id="CHEBI:78442"/>
        <dbReference type="ChEBI" id="CHEBI:138191"/>
        <dbReference type="EC" id="3.1.1.29"/>
    </reaction>
</comment>
<comment type="subunit">
    <text evidence="1">Monomer.</text>
</comment>
<comment type="subcellular location">
    <subcellularLocation>
        <location evidence="1">Cytoplasm</location>
    </subcellularLocation>
</comment>
<comment type="similarity">
    <text evidence="1">Belongs to the PTH family.</text>
</comment>
<reference key="1">
    <citation type="journal article" date="2008" name="ISME J.">
        <title>Comparative genomics of two ecotypes of the marine planktonic copiotroph Alteromonas macleodii suggests alternative lifestyles associated with different kinds of particulate organic matter.</title>
        <authorList>
            <person name="Ivars-Martinez E."/>
            <person name="Martin-Cuadrado A.-B."/>
            <person name="D'Auria G."/>
            <person name="Mira A."/>
            <person name="Ferriera S."/>
            <person name="Johnson J."/>
            <person name="Friedman R."/>
            <person name="Rodriguez-Valera F."/>
        </authorList>
    </citation>
    <scope>NUCLEOTIDE SEQUENCE [LARGE SCALE GENOMIC DNA]</scope>
    <source>
        <strain>DSM 17117 / CIP 110805 / LMG 28347 / Deep ecotype</strain>
    </source>
</reference>
<evidence type="ECO:0000255" key="1">
    <source>
        <dbReference type="HAMAP-Rule" id="MF_00083"/>
    </source>
</evidence>
<gene>
    <name evidence="1" type="primary">pth</name>
    <name type="ordered locus">MADE_1007560</name>
</gene>
<keyword id="KW-0963">Cytoplasm</keyword>
<keyword id="KW-0378">Hydrolase</keyword>
<keyword id="KW-0694">RNA-binding</keyword>
<keyword id="KW-0820">tRNA-binding</keyword>
<feature type="chain" id="PRO_1000092905" description="Peptidyl-tRNA hydrolase">
    <location>
        <begin position="1"/>
        <end position="193"/>
    </location>
</feature>
<feature type="active site" description="Proton acceptor" evidence="1">
    <location>
        <position position="22"/>
    </location>
</feature>
<feature type="binding site" evidence="1">
    <location>
        <position position="17"/>
    </location>
    <ligand>
        <name>tRNA</name>
        <dbReference type="ChEBI" id="CHEBI:17843"/>
    </ligand>
</feature>
<feature type="binding site" evidence="1">
    <location>
        <position position="68"/>
    </location>
    <ligand>
        <name>tRNA</name>
        <dbReference type="ChEBI" id="CHEBI:17843"/>
    </ligand>
</feature>
<feature type="binding site" evidence="1">
    <location>
        <position position="70"/>
    </location>
    <ligand>
        <name>tRNA</name>
        <dbReference type="ChEBI" id="CHEBI:17843"/>
    </ligand>
</feature>
<feature type="binding site" evidence="1">
    <location>
        <position position="115"/>
    </location>
    <ligand>
        <name>tRNA</name>
        <dbReference type="ChEBI" id="CHEBI:17843"/>
    </ligand>
</feature>
<feature type="site" description="Discriminates between blocked and unblocked aminoacyl-tRNA" evidence="1">
    <location>
        <position position="12"/>
    </location>
</feature>
<feature type="site" description="Stabilizes the basic form of H active site to accept a proton" evidence="1">
    <location>
        <position position="95"/>
    </location>
</feature>
<dbReference type="EC" id="3.1.1.29" evidence="1"/>
<dbReference type="EMBL" id="CP001103">
    <property type="protein sequence ID" value="AEA97652.1"/>
    <property type="molecule type" value="Genomic_DNA"/>
</dbReference>
<dbReference type="RefSeq" id="WP_012517992.1">
    <property type="nucleotide sequence ID" value="NC_011138.3"/>
</dbReference>
<dbReference type="SMR" id="B4RT72"/>
<dbReference type="KEGG" id="amc:MADE_1007560"/>
<dbReference type="HOGENOM" id="CLU_062456_3_1_6"/>
<dbReference type="Proteomes" id="UP000001870">
    <property type="component" value="Chromosome"/>
</dbReference>
<dbReference type="GO" id="GO:0005737">
    <property type="term" value="C:cytoplasm"/>
    <property type="evidence" value="ECO:0007669"/>
    <property type="project" value="UniProtKB-SubCell"/>
</dbReference>
<dbReference type="GO" id="GO:0004045">
    <property type="term" value="F:peptidyl-tRNA hydrolase activity"/>
    <property type="evidence" value="ECO:0007669"/>
    <property type="project" value="UniProtKB-UniRule"/>
</dbReference>
<dbReference type="GO" id="GO:0000049">
    <property type="term" value="F:tRNA binding"/>
    <property type="evidence" value="ECO:0007669"/>
    <property type="project" value="UniProtKB-UniRule"/>
</dbReference>
<dbReference type="GO" id="GO:0006515">
    <property type="term" value="P:protein quality control for misfolded or incompletely synthesized proteins"/>
    <property type="evidence" value="ECO:0007669"/>
    <property type="project" value="UniProtKB-UniRule"/>
</dbReference>
<dbReference type="GO" id="GO:0072344">
    <property type="term" value="P:rescue of stalled ribosome"/>
    <property type="evidence" value="ECO:0007669"/>
    <property type="project" value="UniProtKB-UniRule"/>
</dbReference>
<dbReference type="CDD" id="cd00462">
    <property type="entry name" value="PTH"/>
    <property type="match status" value="1"/>
</dbReference>
<dbReference type="FunFam" id="3.40.50.1470:FF:000001">
    <property type="entry name" value="Peptidyl-tRNA hydrolase"/>
    <property type="match status" value="1"/>
</dbReference>
<dbReference type="Gene3D" id="3.40.50.1470">
    <property type="entry name" value="Peptidyl-tRNA hydrolase"/>
    <property type="match status" value="1"/>
</dbReference>
<dbReference type="HAMAP" id="MF_00083">
    <property type="entry name" value="Pept_tRNA_hydro_bact"/>
    <property type="match status" value="1"/>
</dbReference>
<dbReference type="InterPro" id="IPR001328">
    <property type="entry name" value="Pept_tRNA_hydro"/>
</dbReference>
<dbReference type="InterPro" id="IPR018171">
    <property type="entry name" value="Pept_tRNA_hydro_CS"/>
</dbReference>
<dbReference type="InterPro" id="IPR036416">
    <property type="entry name" value="Pept_tRNA_hydro_sf"/>
</dbReference>
<dbReference type="NCBIfam" id="TIGR00447">
    <property type="entry name" value="pth"/>
    <property type="match status" value="1"/>
</dbReference>
<dbReference type="PANTHER" id="PTHR17224">
    <property type="entry name" value="PEPTIDYL-TRNA HYDROLASE"/>
    <property type="match status" value="1"/>
</dbReference>
<dbReference type="PANTHER" id="PTHR17224:SF1">
    <property type="entry name" value="PEPTIDYL-TRNA HYDROLASE"/>
    <property type="match status" value="1"/>
</dbReference>
<dbReference type="Pfam" id="PF01195">
    <property type="entry name" value="Pept_tRNA_hydro"/>
    <property type="match status" value="1"/>
</dbReference>
<dbReference type="SUPFAM" id="SSF53178">
    <property type="entry name" value="Peptidyl-tRNA hydrolase-like"/>
    <property type="match status" value="1"/>
</dbReference>
<dbReference type="PROSITE" id="PS01195">
    <property type="entry name" value="PEPT_TRNA_HYDROL_1"/>
    <property type="match status" value="1"/>
</dbReference>
<sequence length="193" mass="21346">MADIRLIVGLGNPGPEYENTRHNAGEWFLNQLADTYNAPLKPETKFFGKTARITIDGKDIRLLYPTTFMNKSGQAVAALANFYRIEPEQILVAFDELDLPPGVAKYKVGGSSSQNGVRDIVARMGNNKNFLRLRIGIGHPGHKSRVTGHVLGKPSAEEKTAIESAIDEAVRCTEILLKEDLKQAQNRLHSHKV</sequence>